<reference key="1">
    <citation type="book" date="2006" name="Gram positive pathogens, 2nd edition">
        <title>The Staphylococcus aureus NCTC 8325 genome.</title>
        <editorList>
            <person name="Fischetti V."/>
            <person name="Novick R."/>
            <person name="Ferretti J."/>
            <person name="Portnoy D."/>
            <person name="Rood J."/>
        </editorList>
        <authorList>
            <person name="Gillaspy A.F."/>
            <person name="Worrell V."/>
            <person name="Orvis J."/>
            <person name="Roe B.A."/>
            <person name="Dyer D.W."/>
            <person name="Iandolo J.J."/>
        </authorList>
    </citation>
    <scope>NUCLEOTIDE SEQUENCE [LARGE SCALE GENOMIC DNA]</scope>
    <source>
        <strain>NCTC 8325 / PS 47</strain>
    </source>
</reference>
<reference key="2">
    <citation type="journal article" date="2016" name="FEBS Lett.">
        <title>Membrane interactions and self-association of components of the Ess/Type VII secretion system of Staphylococcus aureus.</title>
        <authorList>
            <person name="Jaeger F."/>
            <person name="Zoltner M."/>
            <person name="Kneuper H."/>
            <person name="Hunter W.N."/>
            <person name="Palmer T."/>
        </authorList>
    </citation>
    <scope>SUBUNIT</scope>
    <scope>SUBCELLULAR LOCATION</scope>
    <source>
        <strain>RN6390</strain>
    </source>
</reference>
<reference evidence="10" key="3">
    <citation type="journal article" date="2013" name="Biochem. J.">
        <title>Characterization of Staphylococcus aureus EssB, an integral membrane component of the TypeVII secretion system: atomic resolution crystal structure of the cytoplasmic segment.</title>
        <authorList>
            <person name="Zoltner M."/>
            <person name="Fyfe P.K."/>
            <person name="Palmer T."/>
            <person name="Hunter W.N."/>
        </authorList>
    </citation>
    <scope>X-RAY CRYSTALLOGRAPHY (1.05 ANGSTROMS) OF 12-226</scope>
    <scope>SUBCELLULAR LOCATION</scope>
    <scope>TOPOLOGY</scope>
    <scope>SUBUNIT</scope>
</reference>
<accession>Q2G185</accession>
<keyword id="KW-0002">3D-structure</keyword>
<keyword id="KW-1003">Cell membrane</keyword>
<keyword id="KW-0175">Coiled coil</keyword>
<keyword id="KW-0472">Membrane</keyword>
<keyword id="KW-1185">Reference proteome</keyword>
<keyword id="KW-0812">Transmembrane</keyword>
<keyword id="KW-1133">Transmembrane helix</keyword>
<evidence type="ECO:0000250" key="1">
    <source>
        <dbReference type="UniProtKB" id="P0C053"/>
    </source>
</evidence>
<evidence type="ECO:0000255" key="2"/>
<evidence type="ECO:0000256" key="3">
    <source>
        <dbReference type="SAM" id="MobiDB-lite"/>
    </source>
</evidence>
<evidence type="ECO:0000269" key="4">
    <source>
    </source>
</evidence>
<evidence type="ECO:0000269" key="5">
    <source>
    </source>
</evidence>
<evidence type="ECO:0000303" key="6">
    <source>
    </source>
</evidence>
<evidence type="ECO:0000305" key="7"/>
<evidence type="ECO:0000305" key="8">
    <source>
    </source>
</evidence>
<evidence type="ECO:0000312" key="9">
    <source>
        <dbReference type="EMBL" id="ABD29435.1"/>
    </source>
</evidence>
<evidence type="ECO:0007744" key="10">
    <source>
        <dbReference type="PDB" id="4ANN"/>
    </source>
</evidence>
<evidence type="ECO:0007829" key="11">
    <source>
        <dbReference type="PDB" id="4ANN"/>
    </source>
</evidence>
<name>ESSB_STAA8</name>
<feature type="chain" id="PRO_0000437414" description="Type VII secretion system protein EssB">
    <location>
        <begin position="1"/>
        <end position="444"/>
    </location>
</feature>
<feature type="topological domain" description="Cytoplasmic" evidence="8">
    <location>
        <begin position="1"/>
        <end position="229"/>
    </location>
</feature>
<feature type="transmembrane region" description="Helical" evidence="2">
    <location>
        <begin position="230"/>
        <end position="250"/>
    </location>
</feature>
<feature type="topological domain" description="Extracellular" evidence="8">
    <location>
        <begin position="251"/>
        <end position="444"/>
    </location>
</feature>
<feature type="region of interest" description="Disordered" evidence="3">
    <location>
        <begin position="366"/>
        <end position="444"/>
    </location>
</feature>
<feature type="coiled-coil region" evidence="2">
    <location>
        <begin position="387"/>
        <end position="443"/>
    </location>
</feature>
<feature type="compositionally biased region" description="Basic and acidic residues" evidence="3">
    <location>
        <begin position="372"/>
        <end position="444"/>
    </location>
</feature>
<feature type="strand" evidence="11">
    <location>
        <begin position="32"/>
        <end position="36"/>
    </location>
</feature>
<feature type="helix" evidence="11">
    <location>
        <begin position="37"/>
        <end position="39"/>
    </location>
</feature>
<feature type="helix" evidence="11">
    <location>
        <begin position="42"/>
        <end position="52"/>
    </location>
</feature>
<feature type="strand" evidence="11">
    <location>
        <begin position="61"/>
        <end position="65"/>
    </location>
</feature>
<feature type="strand" evidence="11">
    <location>
        <begin position="67"/>
        <end position="74"/>
    </location>
</feature>
<feature type="strand" evidence="11">
    <location>
        <begin position="80"/>
        <end position="82"/>
    </location>
</feature>
<feature type="helix" evidence="11">
    <location>
        <begin position="83"/>
        <end position="88"/>
    </location>
</feature>
<feature type="helix" evidence="11">
    <location>
        <begin position="91"/>
        <end position="100"/>
    </location>
</feature>
<feature type="helix" evidence="11">
    <location>
        <begin position="101"/>
        <end position="109"/>
    </location>
</feature>
<feature type="strand" evidence="11">
    <location>
        <begin position="110"/>
        <end position="113"/>
    </location>
</feature>
<feature type="helix" evidence="11">
    <location>
        <begin position="118"/>
        <end position="120"/>
    </location>
</feature>
<feature type="strand" evidence="11">
    <location>
        <begin position="121"/>
        <end position="123"/>
    </location>
</feature>
<feature type="strand" evidence="11">
    <location>
        <begin position="129"/>
        <end position="132"/>
    </location>
</feature>
<feature type="turn" evidence="11">
    <location>
        <begin position="137"/>
        <end position="139"/>
    </location>
</feature>
<feature type="helix" evidence="11">
    <location>
        <begin position="147"/>
        <end position="162"/>
    </location>
</feature>
<feature type="helix" evidence="11">
    <location>
        <begin position="168"/>
        <end position="173"/>
    </location>
</feature>
<feature type="helix" evidence="11">
    <location>
        <begin position="176"/>
        <end position="178"/>
    </location>
</feature>
<feature type="helix" evidence="11">
    <location>
        <begin position="183"/>
        <end position="190"/>
    </location>
</feature>
<feature type="helix" evidence="11">
    <location>
        <begin position="194"/>
        <end position="203"/>
    </location>
</feature>
<organism>
    <name type="scientific">Staphylococcus aureus (strain NCTC 8325 / PS 47)</name>
    <dbReference type="NCBI Taxonomy" id="93061"/>
    <lineage>
        <taxon>Bacteria</taxon>
        <taxon>Bacillati</taxon>
        <taxon>Bacillota</taxon>
        <taxon>Bacilli</taxon>
        <taxon>Bacillales</taxon>
        <taxon>Staphylococcaceae</taxon>
        <taxon>Staphylococcus</taxon>
    </lineage>
</organism>
<dbReference type="EMBL" id="CP000253">
    <property type="protein sequence ID" value="ABD29435.1"/>
    <property type="molecule type" value="Genomic_DNA"/>
</dbReference>
<dbReference type="RefSeq" id="WP_000240338.1">
    <property type="nucleotide sequence ID" value="NZ_LS483365.1"/>
</dbReference>
<dbReference type="RefSeq" id="YP_498855.1">
    <property type="nucleotide sequence ID" value="NC_007795.1"/>
</dbReference>
<dbReference type="PDB" id="4ANN">
    <property type="method" value="X-ray"/>
    <property type="resolution" value="1.05 A"/>
    <property type="chains" value="A=12-226"/>
</dbReference>
<dbReference type="PDBsum" id="4ANN"/>
<dbReference type="SMR" id="Q2G185"/>
<dbReference type="STRING" id="93061.SAOUHSC_00261"/>
<dbReference type="PaxDb" id="1280-SAXN108_0266"/>
<dbReference type="GeneID" id="3919203"/>
<dbReference type="KEGG" id="sao:SAOUHSC_00261"/>
<dbReference type="PATRIC" id="fig|93061.5.peg.240"/>
<dbReference type="eggNOG" id="COG4499">
    <property type="taxonomic scope" value="Bacteria"/>
</dbReference>
<dbReference type="HOGENOM" id="CLU_049737_0_0_9"/>
<dbReference type="OrthoDB" id="4975281at2"/>
<dbReference type="EvolutionaryTrace" id="Q2G185"/>
<dbReference type="PRO" id="PR:Q2G185"/>
<dbReference type="Proteomes" id="UP000008816">
    <property type="component" value="Chromosome"/>
</dbReference>
<dbReference type="GO" id="GO:0005886">
    <property type="term" value="C:plasma membrane"/>
    <property type="evidence" value="ECO:0007669"/>
    <property type="project" value="UniProtKB-SubCell"/>
</dbReference>
<dbReference type="Gene3D" id="1.10.510.10">
    <property type="entry name" value="Transferase(Phosphotransferase) domain 1"/>
    <property type="match status" value="1"/>
</dbReference>
<dbReference type="Gene3D" id="1.25.40.680">
    <property type="entry name" value="Type VII secretion system EssB, C-terminal-like domain"/>
    <property type="match status" value="1"/>
</dbReference>
<dbReference type="InterPro" id="IPR018778">
    <property type="entry name" value="T7SS_EssB"/>
</dbReference>
<dbReference type="InterPro" id="IPR042565">
    <property type="entry name" value="T7SS_EssB_C"/>
</dbReference>
<dbReference type="NCBIfam" id="TIGR03926">
    <property type="entry name" value="T7_EssB"/>
    <property type="match status" value="1"/>
</dbReference>
<dbReference type="Pfam" id="PF10140">
    <property type="entry name" value="YukC"/>
    <property type="match status" value="1"/>
</dbReference>
<sequence>MVKNHNPKNEMQDMLTPLDAEEAAKTKLRLDMREIPKSSIKPEHFHLMYLLEQHSPYFIDAELTELRDSFQIHYDINDNHTPFDNIKSFTKNEKLRYLLNIKNLEEVNRTRYTFVLAPDELFFTRDGLPIAKTRGLQNVVDPLPVSEAEFLTRYKALVICAFNEKQSFDALVEGNLELHKGTPFETKVIEAATLDLLTAFLDEQYQKQEQDYSQNYAYVRKVGHTVFKWVAIGMTTLSVLLIAFLAFLYFSVMKHNERIEKGYQAFVKDDYTQVLNTYDDLDGKKLDKEALYIYAKSYIQTNKQGLEKDKKENLLNNVTPNSNKDYLLYWMELGQGHLDEAINIATYLDDNDITKLALINKLNEIKNNGDLSNDKRSEETKKYNDKLQDILDKEKQVKDEKAKSEEEKAKAKDEKLKQQEENEKKQKEQAQKDKEKRQEAERKK</sequence>
<comment type="function">
    <text evidence="1 7">Component of the type VII secretion system (Ess) (Probable). Required for the secretion of EsxA and EsxB (By similarity).</text>
</comment>
<comment type="subunit">
    <text evidence="4 5">Homodimer.</text>
</comment>
<comment type="subcellular location">
    <subcellularLocation>
        <location evidence="4 5">Cell membrane</location>
        <topology evidence="2">Single-pass membrane protein</topology>
    </subcellularLocation>
</comment>
<comment type="similarity">
    <text evidence="7">Belongs to the EssB family.</text>
</comment>
<proteinExistence type="evidence at protein level"/>
<gene>
    <name evidence="6" type="primary">essB</name>
    <name evidence="9" type="ordered locus">SAOUHSC_00261</name>
</gene>
<protein>
    <recommendedName>
        <fullName evidence="7">Type VII secretion system protein EssB</fullName>
    </recommendedName>
</protein>